<sequence length="41" mass="4872">MKVLSSLKSAKTRHRDCKVVRRRGKVFVICKSNPRFKARQR</sequence>
<keyword id="KW-0687">Ribonucleoprotein</keyword>
<keyword id="KW-0689">Ribosomal protein</keyword>
<reference key="1">
    <citation type="journal article" date="2005" name="Genome Res.">
        <title>Comparative and functional genomic analyses of the pathogenicity of phytopathogen Xanthomonas campestris pv. campestris.</title>
        <authorList>
            <person name="Qian W."/>
            <person name="Jia Y."/>
            <person name="Ren S.-X."/>
            <person name="He Y.-Q."/>
            <person name="Feng J.-X."/>
            <person name="Lu L.-F."/>
            <person name="Sun Q."/>
            <person name="Ying G."/>
            <person name="Tang D.-J."/>
            <person name="Tang H."/>
            <person name="Wu W."/>
            <person name="Hao P."/>
            <person name="Wang L."/>
            <person name="Jiang B.-L."/>
            <person name="Zeng S."/>
            <person name="Gu W.-Y."/>
            <person name="Lu G."/>
            <person name="Rong L."/>
            <person name="Tian Y."/>
            <person name="Yao Z."/>
            <person name="Fu G."/>
            <person name="Chen B."/>
            <person name="Fang R."/>
            <person name="Qiang B."/>
            <person name="Chen Z."/>
            <person name="Zhao G.-P."/>
            <person name="Tang J.-L."/>
            <person name="He C."/>
        </authorList>
    </citation>
    <scope>NUCLEOTIDE SEQUENCE [LARGE SCALE GENOMIC DNA]</scope>
    <source>
        <strain>8004</strain>
    </source>
</reference>
<name>RL36_XANC8</name>
<proteinExistence type="inferred from homology"/>
<feature type="chain" id="PRO_0000302332" description="Large ribosomal subunit protein bL36">
    <location>
        <begin position="1"/>
        <end position="41"/>
    </location>
</feature>
<protein>
    <recommendedName>
        <fullName evidence="1">Large ribosomal subunit protein bL36</fullName>
    </recommendedName>
    <alternativeName>
        <fullName evidence="2">50S ribosomal protein L36</fullName>
    </alternativeName>
</protein>
<gene>
    <name evidence="1" type="primary">rpmJ</name>
    <name type="ordered locus">XC_1922</name>
</gene>
<evidence type="ECO:0000255" key="1">
    <source>
        <dbReference type="HAMAP-Rule" id="MF_00251"/>
    </source>
</evidence>
<evidence type="ECO:0000305" key="2"/>
<accession>Q4UVD8</accession>
<dbReference type="EMBL" id="CP000050">
    <property type="protein sequence ID" value="AAY48985.1"/>
    <property type="molecule type" value="Genomic_DNA"/>
</dbReference>
<dbReference type="SMR" id="Q4UVD8"/>
<dbReference type="KEGG" id="xcb:XC_1922"/>
<dbReference type="HOGENOM" id="CLU_135723_3_3_6"/>
<dbReference type="Proteomes" id="UP000000420">
    <property type="component" value="Chromosome"/>
</dbReference>
<dbReference type="GO" id="GO:1990904">
    <property type="term" value="C:ribonucleoprotein complex"/>
    <property type="evidence" value="ECO:0007669"/>
    <property type="project" value="UniProtKB-KW"/>
</dbReference>
<dbReference type="GO" id="GO:0005840">
    <property type="term" value="C:ribosome"/>
    <property type="evidence" value="ECO:0007669"/>
    <property type="project" value="UniProtKB-KW"/>
</dbReference>
<dbReference type="GO" id="GO:0003735">
    <property type="term" value="F:structural constituent of ribosome"/>
    <property type="evidence" value="ECO:0007669"/>
    <property type="project" value="InterPro"/>
</dbReference>
<dbReference type="GO" id="GO:0006412">
    <property type="term" value="P:translation"/>
    <property type="evidence" value="ECO:0007669"/>
    <property type="project" value="UniProtKB-UniRule"/>
</dbReference>
<dbReference type="HAMAP" id="MF_00251">
    <property type="entry name" value="Ribosomal_bL36"/>
    <property type="match status" value="1"/>
</dbReference>
<dbReference type="InterPro" id="IPR000473">
    <property type="entry name" value="Ribosomal_bL36"/>
</dbReference>
<dbReference type="InterPro" id="IPR035977">
    <property type="entry name" value="Ribosomal_bL36_sp"/>
</dbReference>
<dbReference type="InterPro" id="IPR047621">
    <property type="entry name" value="Ribosomal_L36_bact"/>
</dbReference>
<dbReference type="NCBIfam" id="NF002021">
    <property type="entry name" value="PRK00831.1"/>
    <property type="match status" value="1"/>
</dbReference>
<dbReference type="NCBIfam" id="TIGR01022">
    <property type="entry name" value="rpmJ_bact"/>
    <property type="match status" value="1"/>
</dbReference>
<dbReference type="PANTHER" id="PTHR47781">
    <property type="entry name" value="50S RIBOSOMAL PROTEIN L36 2"/>
    <property type="match status" value="1"/>
</dbReference>
<dbReference type="PANTHER" id="PTHR47781:SF1">
    <property type="entry name" value="LARGE RIBOSOMAL SUBUNIT PROTEIN BL36B"/>
    <property type="match status" value="1"/>
</dbReference>
<dbReference type="Pfam" id="PF00444">
    <property type="entry name" value="Ribosomal_L36"/>
    <property type="match status" value="1"/>
</dbReference>
<dbReference type="SUPFAM" id="SSF57840">
    <property type="entry name" value="Ribosomal protein L36"/>
    <property type="match status" value="1"/>
</dbReference>
<dbReference type="PROSITE" id="PS00828">
    <property type="entry name" value="RIBOSOMAL_L36"/>
    <property type="match status" value="1"/>
</dbReference>
<organism>
    <name type="scientific">Xanthomonas campestris pv. campestris (strain 8004)</name>
    <dbReference type="NCBI Taxonomy" id="314565"/>
    <lineage>
        <taxon>Bacteria</taxon>
        <taxon>Pseudomonadati</taxon>
        <taxon>Pseudomonadota</taxon>
        <taxon>Gammaproteobacteria</taxon>
        <taxon>Lysobacterales</taxon>
        <taxon>Lysobacteraceae</taxon>
        <taxon>Xanthomonas</taxon>
    </lineage>
</organism>
<comment type="similarity">
    <text evidence="1">Belongs to the bacterial ribosomal protein bL36 family.</text>
</comment>